<reference key="1">
    <citation type="journal article" date="2008" name="BMC Microbiol.">
        <title>Complete genome sequence of Treponema pallidum ssp. pallidum strain SS14 determined with oligonucleotide arrays.</title>
        <authorList>
            <person name="Matejkova P."/>
            <person name="Strouhal M."/>
            <person name="Smajs D."/>
            <person name="Norris S.J."/>
            <person name="Palzkill T."/>
            <person name="Petrosino J.F."/>
            <person name="Sodergren E."/>
            <person name="Norton J.E."/>
            <person name="Singh J."/>
            <person name="Richmond T.A."/>
            <person name="Molla M.N."/>
            <person name="Albert T.J."/>
            <person name="Weinstock G.M."/>
        </authorList>
    </citation>
    <scope>NUCLEOTIDE SEQUENCE [LARGE SCALE GENOMIC DNA]</scope>
    <source>
        <strain>SS14</strain>
    </source>
</reference>
<evidence type="ECO:0000255" key="1">
    <source>
        <dbReference type="HAMAP-Rule" id="MF_01039"/>
    </source>
</evidence>
<sequence length="251" mass="28358">MKLVLIRHGESEWNRLNLFTGWTDVPLTPRGESEAQEGGRVLQEAGFDFDLCYTSFLKRAIRTLNFVLQALDREWLPVHKSWKLNERHYGDLQGLNKTETAQKYGEQQVRVWRRSFDVAPPPLTVGDARCPHTQASYRGVCASGRTPVLPFTESLKDTVARVVPYFEEEIKPQMISGQRVLIVAHGNSLRALMKHIESLDETQIMEVNLPTGVPLVYEFEADFTLCGKRFLGNEADVAARAQAVADQGKSN</sequence>
<protein>
    <recommendedName>
        <fullName evidence="1">2,3-bisphosphoglycerate-dependent phosphoglycerate mutase</fullName>
        <shortName evidence="1">BPG-dependent PGAM</shortName>
        <shortName evidence="1">PGAM</shortName>
        <shortName evidence="1">Phosphoglyceromutase</shortName>
        <shortName evidence="1">dPGM</shortName>
        <ecNumber evidence="1">5.4.2.11</ecNumber>
    </recommendedName>
</protein>
<name>GPMA_TREPS</name>
<comment type="function">
    <text evidence="1">Catalyzes the interconversion of 2-phosphoglycerate and 3-phosphoglycerate.</text>
</comment>
<comment type="catalytic activity">
    <reaction evidence="1">
        <text>(2R)-2-phosphoglycerate = (2R)-3-phosphoglycerate</text>
        <dbReference type="Rhea" id="RHEA:15901"/>
        <dbReference type="ChEBI" id="CHEBI:58272"/>
        <dbReference type="ChEBI" id="CHEBI:58289"/>
        <dbReference type="EC" id="5.4.2.11"/>
    </reaction>
</comment>
<comment type="pathway">
    <text evidence="1">Carbohydrate degradation; glycolysis; pyruvate from D-glyceraldehyde 3-phosphate: step 3/5.</text>
</comment>
<comment type="similarity">
    <text evidence="1">Belongs to the phosphoglycerate mutase family. BPG-dependent PGAM subfamily.</text>
</comment>
<gene>
    <name evidence="1" type="primary">gpmA</name>
    <name type="ordered locus">TPASS_0168</name>
</gene>
<dbReference type="EC" id="5.4.2.11" evidence="1"/>
<dbReference type="EMBL" id="CP000805">
    <property type="protein sequence ID" value="ACD70594.1"/>
    <property type="molecule type" value="Genomic_DNA"/>
</dbReference>
<dbReference type="RefSeq" id="WP_010881615.1">
    <property type="nucleotide sequence ID" value="NC_021508.1"/>
</dbReference>
<dbReference type="SMR" id="B2S2B5"/>
<dbReference type="GeneID" id="93875960"/>
<dbReference type="KEGG" id="tpp:TPASS_0168"/>
<dbReference type="PATRIC" id="fig|455434.6.peg.176"/>
<dbReference type="UniPathway" id="UPA00109">
    <property type="reaction ID" value="UER00186"/>
</dbReference>
<dbReference type="Proteomes" id="UP000001202">
    <property type="component" value="Chromosome"/>
</dbReference>
<dbReference type="GO" id="GO:0004619">
    <property type="term" value="F:phosphoglycerate mutase activity"/>
    <property type="evidence" value="ECO:0007669"/>
    <property type="project" value="UniProtKB-EC"/>
</dbReference>
<dbReference type="GO" id="GO:0006094">
    <property type="term" value="P:gluconeogenesis"/>
    <property type="evidence" value="ECO:0007669"/>
    <property type="project" value="UniProtKB-UniRule"/>
</dbReference>
<dbReference type="GO" id="GO:0006096">
    <property type="term" value="P:glycolytic process"/>
    <property type="evidence" value="ECO:0007669"/>
    <property type="project" value="UniProtKB-UniRule"/>
</dbReference>
<dbReference type="CDD" id="cd07067">
    <property type="entry name" value="HP_PGM_like"/>
    <property type="match status" value="1"/>
</dbReference>
<dbReference type="FunFam" id="3.40.50.1240:FF:000003">
    <property type="entry name" value="2,3-bisphosphoglycerate-dependent phosphoglycerate mutase"/>
    <property type="match status" value="1"/>
</dbReference>
<dbReference type="Gene3D" id="3.40.50.1240">
    <property type="entry name" value="Phosphoglycerate mutase-like"/>
    <property type="match status" value="1"/>
</dbReference>
<dbReference type="HAMAP" id="MF_01039">
    <property type="entry name" value="PGAM_GpmA"/>
    <property type="match status" value="1"/>
</dbReference>
<dbReference type="InterPro" id="IPR013078">
    <property type="entry name" value="His_Pase_superF_clade-1"/>
</dbReference>
<dbReference type="InterPro" id="IPR029033">
    <property type="entry name" value="His_PPase_superfam"/>
</dbReference>
<dbReference type="InterPro" id="IPR001345">
    <property type="entry name" value="PG/BPGM_mutase_AS"/>
</dbReference>
<dbReference type="InterPro" id="IPR005952">
    <property type="entry name" value="Phosphogly_mut1"/>
</dbReference>
<dbReference type="NCBIfam" id="TIGR01258">
    <property type="entry name" value="pgm_1"/>
    <property type="match status" value="1"/>
</dbReference>
<dbReference type="NCBIfam" id="NF010713">
    <property type="entry name" value="PRK14115.1"/>
    <property type="match status" value="1"/>
</dbReference>
<dbReference type="PANTHER" id="PTHR11931">
    <property type="entry name" value="PHOSPHOGLYCERATE MUTASE"/>
    <property type="match status" value="1"/>
</dbReference>
<dbReference type="Pfam" id="PF00300">
    <property type="entry name" value="His_Phos_1"/>
    <property type="match status" value="2"/>
</dbReference>
<dbReference type="PIRSF" id="PIRSF000709">
    <property type="entry name" value="6PFK_2-Ptase"/>
    <property type="match status" value="1"/>
</dbReference>
<dbReference type="SMART" id="SM00855">
    <property type="entry name" value="PGAM"/>
    <property type="match status" value="1"/>
</dbReference>
<dbReference type="SUPFAM" id="SSF53254">
    <property type="entry name" value="Phosphoglycerate mutase-like"/>
    <property type="match status" value="1"/>
</dbReference>
<dbReference type="PROSITE" id="PS00175">
    <property type="entry name" value="PG_MUTASE"/>
    <property type="match status" value="1"/>
</dbReference>
<organism>
    <name type="scientific">Treponema pallidum subsp. pallidum (strain SS14)</name>
    <dbReference type="NCBI Taxonomy" id="455434"/>
    <lineage>
        <taxon>Bacteria</taxon>
        <taxon>Pseudomonadati</taxon>
        <taxon>Spirochaetota</taxon>
        <taxon>Spirochaetia</taxon>
        <taxon>Spirochaetales</taxon>
        <taxon>Treponemataceae</taxon>
        <taxon>Treponema</taxon>
    </lineage>
</organism>
<accession>B2S2B5</accession>
<feature type="chain" id="PRO_1000135989" description="2,3-bisphosphoglycerate-dependent phosphoglycerate mutase">
    <location>
        <begin position="1"/>
        <end position="251"/>
    </location>
</feature>
<feature type="active site" description="Tele-phosphohistidine intermediate" evidence="1">
    <location>
        <position position="8"/>
    </location>
</feature>
<feature type="active site" description="Proton donor/acceptor" evidence="1">
    <location>
        <position position="86"/>
    </location>
</feature>
<feature type="binding site" evidence="1">
    <location>
        <begin position="7"/>
        <end position="14"/>
    </location>
    <ligand>
        <name>substrate</name>
    </ligand>
</feature>
<feature type="binding site" evidence="1">
    <location>
        <begin position="20"/>
        <end position="21"/>
    </location>
    <ligand>
        <name>substrate</name>
    </ligand>
</feature>
<feature type="binding site" evidence="1">
    <location>
        <position position="59"/>
    </location>
    <ligand>
        <name>substrate</name>
    </ligand>
</feature>
<feature type="binding site" evidence="1">
    <location>
        <begin position="86"/>
        <end position="89"/>
    </location>
    <ligand>
        <name>substrate</name>
    </ligand>
</feature>
<feature type="binding site" evidence="1">
    <location>
        <position position="97"/>
    </location>
    <ligand>
        <name>substrate</name>
    </ligand>
</feature>
<feature type="binding site" evidence="1">
    <location>
        <begin position="113"/>
        <end position="114"/>
    </location>
    <ligand>
        <name>substrate</name>
    </ligand>
</feature>
<feature type="binding site" evidence="1">
    <location>
        <begin position="186"/>
        <end position="187"/>
    </location>
    <ligand>
        <name>substrate</name>
    </ligand>
</feature>
<feature type="site" description="Transition state stabilizer" evidence="1">
    <location>
        <position position="185"/>
    </location>
</feature>
<proteinExistence type="inferred from homology"/>
<keyword id="KW-0312">Gluconeogenesis</keyword>
<keyword id="KW-0324">Glycolysis</keyword>
<keyword id="KW-0413">Isomerase</keyword>